<comment type="function">
    <text evidence="1">NDH-1 shuttles electrons from NADH, via FMN and iron-sulfur (Fe-S) centers, to quinones in the respiratory chain. The immediate electron acceptor for the enzyme in this species is believed to be ubiquinone. Couples the redox reaction to proton translocation (for every two electrons transferred, four hydrogen ions are translocated across the cytoplasmic membrane), and thus conserves the redox energy in a proton gradient.</text>
</comment>
<comment type="catalytic activity">
    <reaction evidence="1">
        <text>a quinone + NADH + 5 H(+)(in) = a quinol + NAD(+) + 4 H(+)(out)</text>
        <dbReference type="Rhea" id="RHEA:57888"/>
        <dbReference type="ChEBI" id="CHEBI:15378"/>
        <dbReference type="ChEBI" id="CHEBI:24646"/>
        <dbReference type="ChEBI" id="CHEBI:57540"/>
        <dbReference type="ChEBI" id="CHEBI:57945"/>
        <dbReference type="ChEBI" id="CHEBI:132124"/>
    </reaction>
</comment>
<comment type="subunit">
    <text evidence="1">NDH-1 is composed of 14 different subunits. Subunits NuoA, H, J, K, L, M, N constitute the membrane sector of the complex.</text>
</comment>
<comment type="subcellular location">
    <subcellularLocation>
        <location evidence="1">Cell inner membrane</location>
        <topology evidence="1">Multi-pass membrane protein</topology>
    </subcellularLocation>
</comment>
<comment type="similarity">
    <text evidence="1">Belongs to the complex I subunit 2 family.</text>
</comment>
<organism>
    <name type="scientific">Nitrosomonas europaea (strain ATCC 19718 / CIP 103999 / KCTC 2705 / NBRC 14298)</name>
    <dbReference type="NCBI Taxonomy" id="228410"/>
    <lineage>
        <taxon>Bacteria</taxon>
        <taxon>Pseudomonadati</taxon>
        <taxon>Pseudomonadota</taxon>
        <taxon>Betaproteobacteria</taxon>
        <taxon>Nitrosomonadales</taxon>
        <taxon>Nitrosomonadaceae</taxon>
        <taxon>Nitrosomonas</taxon>
    </lineage>
</organism>
<keyword id="KW-0997">Cell inner membrane</keyword>
<keyword id="KW-1003">Cell membrane</keyword>
<keyword id="KW-0472">Membrane</keyword>
<keyword id="KW-0520">NAD</keyword>
<keyword id="KW-0874">Quinone</keyword>
<keyword id="KW-1185">Reference proteome</keyword>
<keyword id="KW-1278">Translocase</keyword>
<keyword id="KW-0812">Transmembrane</keyword>
<keyword id="KW-1133">Transmembrane helix</keyword>
<keyword id="KW-0813">Transport</keyword>
<keyword id="KW-0830">Ubiquinone</keyword>
<proteinExistence type="inferred from homology"/>
<reference key="1">
    <citation type="journal article" date="2003" name="J. Bacteriol.">
        <title>Complete genome sequence of the ammonia-oxidizing bacterium and obligate chemolithoautotroph Nitrosomonas europaea.</title>
        <authorList>
            <person name="Chain P."/>
            <person name="Lamerdin J.E."/>
            <person name="Larimer F.W."/>
            <person name="Regala W."/>
            <person name="Lao V."/>
            <person name="Land M.L."/>
            <person name="Hauser L."/>
            <person name="Hooper A.B."/>
            <person name="Klotz M.G."/>
            <person name="Norton J."/>
            <person name="Sayavedra-Soto L.A."/>
            <person name="Arciero D.M."/>
            <person name="Hommes N.G."/>
            <person name="Whittaker M.M."/>
            <person name="Arp D.J."/>
        </authorList>
    </citation>
    <scope>NUCLEOTIDE SEQUENCE [LARGE SCALE GENOMIC DNA]</scope>
    <source>
        <strain>ATCC 19718 / CIP 103999 / KCTC 2705 / NBRC 14298</strain>
    </source>
</reference>
<gene>
    <name evidence="1" type="primary">nuoN</name>
    <name type="ordered locus">NE1764</name>
</gene>
<name>NUON_NITEU</name>
<dbReference type="EC" id="7.1.1.-" evidence="1"/>
<dbReference type="EMBL" id="AL954747">
    <property type="protein sequence ID" value="CAD85675.1"/>
    <property type="molecule type" value="Genomic_DNA"/>
</dbReference>
<dbReference type="RefSeq" id="WP_011112315.1">
    <property type="nucleotide sequence ID" value="NC_004757.1"/>
</dbReference>
<dbReference type="SMR" id="Q82TV6"/>
<dbReference type="STRING" id="228410.NE1764"/>
<dbReference type="GeneID" id="87104925"/>
<dbReference type="KEGG" id="neu:NE1764"/>
<dbReference type="eggNOG" id="COG1007">
    <property type="taxonomic scope" value="Bacteria"/>
</dbReference>
<dbReference type="HOGENOM" id="CLU_007100_1_3_4"/>
<dbReference type="OrthoDB" id="9768329at2"/>
<dbReference type="PhylomeDB" id="Q82TV6"/>
<dbReference type="Proteomes" id="UP000001416">
    <property type="component" value="Chromosome"/>
</dbReference>
<dbReference type="GO" id="GO:0005886">
    <property type="term" value="C:plasma membrane"/>
    <property type="evidence" value="ECO:0007669"/>
    <property type="project" value="UniProtKB-SubCell"/>
</dbReference>
<dbReference type="GO" id="GO:0008137">
    <property type="term" value="F:NADH dehydrogenase (ubiquinone) activity"/>
    <property type="evidence" value="ECO:0007669"/>
    <property type="project" value="InterPro"/>
</dbReference>
<dbReference type="GO" id="GO:0050136">
    <property type="term" value="F:NADH:ubiquinone reductase (non-electrogenic) activity"/>
    <property type="evidence" value="ECO:0007669"/>
    <property type="project" value="UniProtKB-UniRule"/>
</dbReference>
<dbReference type="GO" id="GO:0048038">
    <property type="term" value="F:quinone binding"/>
    <property type="evidence" value="ECO:0007669"/>
    <property type="project" value="UniProtKB-KW"/>
</dbReference>
<dbReference type="GO" id="GO:0042773">
    <property type="term" value="P:ATP synthesis coupled electron transport"/>
    <property type="evidence" value="ECO:0007669"/>
    <property type="project" value="InterPro"/>
</dbReference>
<dbReference type="HAMAP" id="MF_00445">
    <property type="entry name" value="NDH1_NuoN_1"/>
    <property type="match status" value="1"/>
</dbReference>
<dbReference type="InterPro" id="IPR010096">
    <property type="entry name" value="NADH-Q_OxRdtase_suN/2"/>
</dbReference>
<dbReference type="InterPro" id="IPR001750">
    <property type="entry name" value="ND/Mrp_TM"/>
</dbReference>
<dbReference type="NCBIfam" id="TIGR01770">
    <property type="entry name" value="NDH_I_N"/>
    <property type="match status" value="1"/>
</dbReference>
<dbReference type="NCBIfam" id="NF004442">
    <property type="entry name" value="PRK05777.1-5"/>
    <property type="match status" value="1"/>
</dbReference>
<dbReference type="PANTHER" id="PTHR22773">
    <property type="entry name" value="NADH DEHYDROGENASE"/>
    <property type="match status" value="1"/>
</dbReference>
<dbReference type="Pfam" id="PF00361">
    <property type="entry name" value="Proton_antipo_M"/>
    <property type="match status" value="1"/>
</dbReference>
<dbReference type="PRINTS" id="PR01434">
    <property type="entry name" value="NADHDHGNASE5"/>
</dbReference>
<protein>
    <recommendedName>
        <fullName evidence="1">NADH-quinone oxidoreductase subunit N</fullName>
        <ecNumber evidence="1">7.1.1.-</ecNumber>
    </recommendedName>
    <alternativeName>
        <fullName evidence="1">NADH dehydrogenase I subunit N</fullName>
    </alternativeName>
    <alternativeName>
        <fullName evidence="1">NDH-1 subunit N</fullName>
    </alternativeName>
</protein>
<feature type="chain" id="PRO_0000391189" description="NADH-quinone oxidoreductase subunit N">
    <location>
        <begin position="1"/>
        <end position="481"/>
    </location>
</feature>
<feature type="transmembrane region" description="Helical" evidence="1">
    <location>
        <begin position="11"/>
        <end position="31"/>
    </location>
</feature>
<feature type="transmembrane region" description="Helical" evidence="1">
    <location>
        <begin position="37"/>
        <end position="57"/>
    </location>
</feature>
<feature type="transmembrane region" description="Helical" evidence="1">
    <location>
        <begin position="74"/>
        <end position="94"/>
    </location>
</feature>
<feature type="transmembrane region" description="Helical" evidence="1">
    <location>
        <begin position="103"/>
        <end position="123"/>
    </location>
</feature>
<feature type="transmembrane region" description="Helical" evidence="1">
    <location>
        <begin position="128"/>
        <end position="148"/>
    </location>
</feature>
<feature type="transmembrane region" description="Helical" evidence="1">
    <location>
        <begin position="162"/>
        <end position="182"/>
    </location>
</feature>
<feature type="transmembrane region" description="Helical" evidence="1">
    <location>
        <begin position="205"/>
        <end position="225"/>
    </location>
</feature>
<feature type="transmembrane region" description="Helical" evidence="1">
    <location>
        <begin position="238"/>
        <end position="258"/>
    </location>
</feature>
<feature type="transmembrane region" description="Helical" evidence="1">
    <location>
        <begin position="272"/>
        <end position="292"/>
    </location>
</feature>
<feature type="transmembrane region" description="Helical" evidence="1">
    <location>
        <begin position="300"/>
        <end position="320"/>
    </location>
</feature>
<feature type="transmembrane region" description="Helical" evidence="1">
    <location>
        <begin position="328"/>
        <end position="348"/>
    </location>
</feature>
<feature type="transmembrane region" description="Helical" evidence="1">
    <location>
        <begin position="371"/>
        <end position="391"/>
    </location>
</feature>
<feature type="transmembrane region" description="Helical" evidence="1">
    <location>
        <begin position="405"/>
        <end position="425"/>
    </location>
</feature>
<feature type="transmembrane region" description="Helical" evidence="1">
    <location>
        <begin position="457"/>
        <end position="477"/>
    </location>
</feature>
<evidence type="ECO:0000255" key="1">
    <source>
        <dbReference type="HAMAP-Rule" id="MF_00445"/>
    </source>
</evidence>
<sequence length="481" mass="52461">MDFLLPDFTPAYPEIFLLLMVCVVMLADLFAGERNRYLAFYLSLLTLAGCALVTCGIYSTEVRYTFTGMFVGDAMSDILKLLIYVTVAAVLIYSRSYISTRGLLKGEFFSLALFATLGMMVMVSANHLITLYLGLELLSLSLYAMVALQRESAIATEAAIKFFVLGALASGFLLYGMSMLYGATGTLHLPELAKVIHSGQADHEIFIIGLVFVVAGIGFKLSAVPFHMWAPDIYEGAPTAVTLFIGSAPKFAAFGFVMRLLVGGLGDLVTDWQGMLVLLAVASMAVGNIAAIAQQNIKRMLAYSTISHMGFVLLGFIAAGENGYSSSMFYVIAYVLMTLGAFGIIMLVSREGFEADKISDLKGLNQRNPWLAFMMLLVMFSMAGIPPMIGFYAKLSVLQAVLEAGYIWLVVVAVMLSLIGAFYYLRIIKFMYFDAPEQTQPIMFKPDVKVLVSINGLAIILLGMFPQMLMGLSLSAIQHSM</sequence>
<accession>Q82TV6</accession>